<reference key="1">
    <citation type="journal article" date="2002" name="Nat. Genet.">
        <title>Genome sequence of the endocellular obligate symbiont of tsetse flies, Wigglesworthia glossinidia.</title>
        <authorList>
            <person name="Akman L."/>
            <person name="Yamashita A."/>
            <person name="Watanabe H."/>
            <person name="Oshima K."/>
            <person name="Shiba T."/>
            <person name="Hattori M."/>
            <person name="Aksoy S."/>
        </authorList>
    </citation>
    <scope>NUCLEOTIDE SEQUENCE [LARGE SCALE GENOMIC DNA]</scope>
</reference>
<name>RUVC_WIGBR</name>
<comment type="function">
    <text evidence="1">The RuvA-RuvB-RuvC complex processes Holliday junction (HJ) DNA during genetic recombination and DNA repair. Endonuclease that resolves HJ intermediates. Cleaves cruciform DNA by making single-stranded nicks across the HJ at symmetrical positions within the homologous arms, yielding a 5'-phosphate and a 3'-hydroxyl group; requires a central core of homology in the junction. The consensus cleavage sequence is 5'-(A/T)TT(C/G)-3'. Cleavage occurs on the 3'-side of the TT dinucleotide at the point of strand exchange. HJ branch migration catalyzed by RuvA-RuvB allows RuvC to scan DNA until it finds its consensus sequence, where it cleaves and resolves the cruciform DNA.</text>
</comment>
<comment type="catalytic activity">
    <reaction evidence="1">
        <text>Endonucleolytic cleavage at a junction such as a reciprocal single-stranded crossover between two homologous DNA duplexes (Holliday junction).</text>
        <dbReference type="EC" id="3.1.21.10"/>
    </reaction>
</comment>
<comment type="cofactor">
    <cofactor evidence="1">
        <name>Mg(2+)</name>
        <dbReference type="ChEBI" id="CHEBI:18420"/>
    </cofactor>
    <text evidence="1">Binds 2 Mg(2+) ion per subunit.</text>
</comment>
<comment type="subunit">
    <text evidence="1">Homodimer which binds Holliday junction (HJ) DNA. The HJ becomes 2-fold symmetrical on binding to RuvC with unstacked arms; it has a different conformation from HJ DNA in complex with RuvA. In the full resolvosome a probable DNA-RuvA(4)-RuvB(12)-RuvC(2) complex forms which resolves the HJ.</text>
</comment>
<comment type="subcellular location">
    <subcellularLocation>
        <location evidence="1">Cytoplasm</location>
    </subcellularLocation>
</comment>
<comment type="similarity">
    <text evidence="1">Belongs to the RuvC family.</text>
</comment>
<organism>
    <name type="scientific">Wigglesworthia glossinidia brevipalpis</name>
    <dbReference type="NCBI Taxonomy" id="36870"/>
    <lineage>
        <taxon>Bacteria</taxon>
        <taxon>Pseudomonadati</taxon>
        <taxon>Pseudomonadota</taxon>
        <taxon>Gammaproteobacteria</taxon>
        <taxon>Enterobacterales</taxon>
        <taxon>Erwiniaceae</taxon>
        <taxon>Wigglesworthia</taxon>
    </lineage>
</organism>
<sequence length="161" mass="17959">MSIIIGIDPGSYVTGYGIIKSEKNTLKHIKSGSIFLKKHDFKKRLKIIYICIKNIINKFKPKYFVIEQIFFSKNPSSVLKLGQASCAATLAAINLDILIFEYASKKIKKILVGDGKAKKLQVKNKVCSILNLSKSIGIDTSDALAVAITHHYLINNKDKIF</sequence>
<gene>
    <name evidence="1" type="primary">ruvC</name>
    <name type="ordered locus">WIGBR1140</name>
</gene>
<feature type="chain" id="PRO_0000183147" description="Crossover junction endodeoxyribonuclease RuvC">
    <location>
        <begin position="1"/>
        <end position="161"/>
    </location>
</feature>
<feature type="active site" evidence="1">
    <location>
        <position position="8"/>
    </location>
</feature>
<feature type="active site" evidence="1">
    <location>
        <position position="67"/>
    </location>
</feature>
<feature type="active site" evidence="1">
    <location>
        <position position="139"/>
    </location>
</feature>
<feature type="binding site" evidence="1">
    <location>
        <position position="8"/>
    </location>
    <ligand>
        <name>Mg(2+)</name>
        <dbReference type="ChEBI" id="CHEBI:18420"/>
        <label>1</label>
    </ligand>
</feature>
<feature type="binding site" evidence="1">
    <location>
        <position position="67"/>
    </location>
    <ligand>
        <name>Mg(2+)</name>
        <dbReference type="ChEBI" id="CHEBI:18420"/>
        <label>2</label>
    </ligand>
</feature>
<feature type="binding site" evidence="1">
    <location>
        <position position="139"/>
    </location>
    <ligand>
        <name>Mg(2+)</name>
        <dbReference type="ChEBI" id="CHEBI:18420"/>
        <label>1</label>
    </ligand>
</feature>
<proteinExistence type="inferred from homology"/>
<keyword id="KW-0963">Cytoplasm</keyword>
<keyword id="KW-0227">DNA damage</keyword>
<keyword id="KW-0233">DNA recombination</keyword>
<keyword id="KW-0234">DNA repair</keyword>
<keyword id="KW-0238">DNA-binding</keyword>
<keyword id="KW-0255">Endonuclease</keyword>
<keyword id="KW-0378">Hydrolase</keyword>
<keyword id="KW-0460">Magnesium</keyword>
<keyword id="KW-0479">Metal-binding</keyword>
<keyword id="KW-0540">Nuclease</keyword>
<keyword id="KW-1185">Reference proteome</keyword>
<dbReference type="EC" id="3.1.21.10" evidence="1"/>
<dbReference type="EMBL" id="BA000021">
    <property type="protein sequence ID" value="BAC24260.1"/>
    <property type="molecule type" value="Genomic_DNA"/>
</dbReference>
<dbReference type="SMR" id="Q8D387"/>
<dbReference type="STRING" id="36870.gene:10368592"/>
<dbReference type="KEGG" id="wbr:ruvC"/>
<dbReference type="eggNOG" id="COG0817">
    <property type="taxonomic scope" value="Bacteria"/>
</dbReference>
<dbReference type="HOGENOM" id="CLU_091257_2_1_6"/>
<dbReference type="OrthoDB" id="9805499at2"/>
<dbReference type="Proteomes" id="UP000000562">
    <property type="component" value="Chromosome"/>
</dbReference>
<dbReference type="GO" id="GO:0005737">
    <property type="term" value="C:cytoplasm"/>
    <property type="evidence" value="ECO:0007669"/>
    <property type="project" value="UniProtKB-SubCell"/>
</dbReference>
<dbReference type="GO" id="GO:0048476">
    <property type="term" value="C:Holliday junction resolvase complex"/>
    <property type="evidence" value="ECO:0007669"/>
    <property type="project" value="UniProtKB-UniRule"/>
</dbReference>
<dbReference type="GO" id="GO:0008821">
    <property type="term" value="F:crossover junction DNA endonuclease activity"/>
    <property type="evidence" value="ECO:0007669"/>
    <property type="project" value="UniProtKB-UniRule"/>
</dbReference>
<dbReference type="GO" id="GO:0003677">
    <property type="term" value="F:DNA binding"/>
    <property type="evidence" value="ECO:0007669"/>
    <property type="project" value="UniProtKB-KW"/>
</dbReference>
<dbReference type="GO" id="GO:0000287">
    <property type="term" value="F:magnesium ion binding"/>
    <property type="evidence" value="ECO:0007669"/>
    <property type="project" value="UniProtKB-UniRule"/>
</dbReference>
<dbReference type="GO" id="GO:0006310">
    <property type="term" value="P:DNA recombination"/>
    <property type="evidence" value="ECO:0007669"/>
    <property type="project" value="UniProtKB-UniRule"/>
</dbReference>
<dbReference type="GO" id="GO:0006281">
    <property type="term" value="P:DNA repair"/>
    <property type="evidence" value="ECO:0007669"/>
    <property type="project" value="UniProtKB-UniRule"/>
</dbReference>
<dbReference type="CDD" id="cd16962">
    <property type="entry name" value="RuvC"/>
    <property type="match status" value="1"/>
</dbReference>
<dbReference type="FunFam" id="3.30.420.10:FF:000002">
    <property type="entry name" value="Crossover junction endodeoxyribonuclease RuvC"/>
    <property type="match status" value="1"/>
</dbReference>
<dbReference type="Gene3D" id="3.30.420.10">
    <property type="entry name" value="Ribonuclease H-like superfamily/Ribonuclease H"/>
    <property type="match status" value="1"/>
</dbReference>
<dbReference type="HAMAP" id="MF_00034">
    <property type="entry name" value="RuvC"/>
    <property type="match status" value="1"/>
</dbReference>
<dbReference type="InterPro" id="IPR012337">
    <property type="entry name" value="RNaseH-like_sf"/>
</dbReference>
<dbReference type="InterPro" id="IPR036397">
    <property type="entry name" value="RNaseH_sf"/>
</dbReference>
<dbReference type="InterPro" id="IPR020563">
    <property type="entry name" value="X-over_junc_endoDNase_Mg_BS"/>
</dbReference>
<dbReference type="InterPro" id="IPR002176">
    <property type="entry name" value="X-over_junc_endoDNase_RuvC"/>
</dbReference>
<dbReference type="NCBIfam" id="TIGR00228">
    <property type="entry name" value="ruvC"/>
    <property type="match status" value="1"/>
</dbReference>
<dbReference type="PANTHER" id="PTHR30194">
    <property type="entry name" value="CROSSOVER JUNCTION ENDODEOXYRIBONUCLEASE RUVC"/>
    <property type="match status" value="1"/>
</dbReference>
<dbReference type="PANTHER" id="PTHR30194:SF3">
    <property type="entry name" value="CROSSOVER JUNCTION ENDODEOXYRIBONUCLEASE RUVC"/>
    <property type="match status" value="1"/>
</dbReference>
<dbReference type="Pfam" id="PF02075">
    <property type="entry name" value="RuvC"/>
    <property type="match status" value="1"/>
</dbReference>
<dbReference type="PRINTS" id="PR00696">
    <property type="entry name" value="RSOLVASERUVC"/>
</dbReference>
<dbReference type="SUPFAM" id="SSF53098">
    <property type="entry name" value="Ribonuclease H-like"/>
    <property type="match status" value="1"/>
</dbReference>
<dbReference type="PROSITE" id="PS01321">
    <property type="entry name" value="RUVC"/>
    <property type="match status" value="1"/>
</dbReference>
<protein>
    <recommendedName>
        <fullName evidence="1">Crossover junction endodeoxyribonuclease RuvC</fullName>
        <ecNumber evidence="1">3.1.21.10</ecNumber>
    </recommendedName>
    <alternativeName>
        <fullName evidence="1">Holliday junction nuclease RuvC</fullName>
    </alternativeName>
    <alternativeName>
        <fullName evidence="1">Holliday junction resolvase RuvC</fullName>
    </alternativeName>
</protein>
<accession>Q8D387</accession>
<evidence type="ECO:0000255" key="1">
    <source>
        <dbReference type="HAMAP-Rule" id="MF_00034"/>
    </source>
</evidence>